<evidence type="ECO:0000255" key="1">
    <source>
        <dbReference type="HAMAP-Rule" id="MF_00249"/>
    </source>
</evidence>
<dbReference type="EMBL" id="AM260522">
    <property type="protein sequence ID" value="CAJ99666.1"/>
    <property type="molecule type" value="Genomic_DNA"/>
</dbReference>
<dbReference type="RefSeq" id="WP_011577778.1">
    <property type="nucleotide sequence ID" value="NC_008229.1"/>
</dbReference>
<dbReference type="SMR" id="Q17XG0"/>
<dbReference type="STRING" id="382638.Hac_0884"/>
<dbReference type="GeneID" id="31758292"/>
<dbReference type="KEGG" id="hac:Hac_0884"/>
<dbReference type="eggNOG" id="COG1220">
    <property type="taxonomic scope" value="Bacteria"/>
</dbReference>
<dbReference type="HOGENOM" id="CLU_033123_0_0_7"/>
<dbReference type="OrthoDB" id="9804062at2"/>
<dbReference type="BioCyc" id="HACI382638:HAC_RS03805-MONOMER"/>
<dbReference type="Proteomes" id="UP000000775">
    <property type="component" value="Chromosome"/>
</dbReference>
<dbReference type="GO" id="GO:0009376">
    <property type="term" value="C:HslUV protease complex"/>
    <property type="evidence" value="ECO:0007669"/>
    <property type="project" value="UniProtKB-UniRule"/>
</dbReference>
<dbReference type="GO" id="GO:0005524">
    <property type="term" value="F:ATP binding"/>
    <property type="evidence" value="ECO:0007669"/>
    <property type="project" value="UniProtKB-UniRule"/>
</dbReference>
<dbReference type="GO" id="GO:0016887">
    <property type="term" value="F:ATP hydrolysis activity"/>
    <property type="evidence" value="ECO:0007669"/>
    <property type="project" value="InterPro"/>
</dbReference>
<dbReference type="GO" id="GO:0008233">
    <property type="term" value="F:peptidase activity"/>
    <property type="evidence" value="ECO:0007669"/>
    <property type="project" value="InterPro"/>
</dbReference>
<dbReference type="GO" id="GO:0036402">
    <property type="term" value="F:proteasome-activating activity"/>
    <property type="evidence" value="ECO:0007669"/>
    <property type="project" value="UniProtKB-UniRule"/>
</dbReference>
<dbReference type="GO" id="GO:0043335">
    <property type="term" value="P:protein unfolding"/>
    <property type="evidence" value="ECO:0007669"/>
    <property type="project" value="UniProtKB-UniRule"/>
</dbReference>
<dbReference type="GO" id="GO:0051603">
    <property type="term" value="P:proteolysis involved in protein catabolic process"/>
    <property type="evidence" value="ECO:0007669"/>
    <property type="project" value="TreeGrafter"/>
</dbReference>
<dbReference type="Gene3D" id="1.10.8.60">
    <property type="match status" value="1"/>
</dbReference>
<dbReference type="Gene3D" id="3.40.50.300">
    <property type="entry name" value="P-loop containing nucleotide triphosphate hydrolases"/>
    <property type="match status" value="2"/>
</dbReference>
<dbReference type="HAMAP" id="MF_00249">
    <property type="entry name" value="HslU"/>
    <property type="match status" value="1"/>
</dbReference>
<dbReference type="InterPro" id="IPR003593">
    <property type="entry name" value="AAA+_ATPase"/>
</dbReference>
<dbReference type="InterPro" id="IPR050052">
    <property type="entry name" value="ATP-dep_Clp_protease_ClpX"/>
</dbReference>
<dbReference type="InterPro" id="IPR003959">
    <property type="entry name" value="ATPase_AAA_core"/>
</dbReference>
<dbReference type="InterPro" id="IPR019489">
    <property type="entry name" value="Clp_ATPase_C"/>
</dbReference>
<dbReference type="InterPro" id="IPR004491">
    <property type="entry name" value="HslU"/>
</dbReference>
<dbReference type="InterPro" id="IPR027417">
    <property type="entry name" value="P-loop_NTPase"/>
</dbReference>
<dbReference type="NCBIfam" id="TIGR00390">
    <property type="entry name" value="hslU"/>
    <property type="match status" value="1"/>
</dbReference>
<dbReference type="NCBIfam" id="NF003544">
    <property type="entry name" value="PRK05201.1"/>
    <property type="match status" value="1"/>
</dbReference>
<dbReference type="PANTHER" id="PTHR48102">
    <property type="entry name" value="ATP-DEPENDENT CLP PROTEASE ATP-BINDING SUBUNIT CLPX-LIKE, MITOCHONDRIAL-RELATED"/>
    <property type="match status" value="1"/>
</dbReference>
<dbReference type="PANTHER" id="PTHR48102:SF3">
    <property type="entry name" value="ATP-DEPENDENT PROTEASE ATPASE SUBUNIT HSLU"/>
    <property type="match status" value="1"/>
</dbReference>
<dbReference type="Pfam" id="PF00004">
    <property type="entry name" value="AAA"/>
    <property type="match status" value="1"/>
</dbReference>
<dbReference type="Pfam" id="PF07724">
    <property type="entry name" value="AAA_2"/>
    <property type="match status" value="1"/>
</dbReference>
<dbReference type="SMART" id="SM00382">
    <property type="entry name" value="AAA"/>
    <property type="match status" value="1"/>
</dbReference>
<dbReference type="SMART" id="SM01086">
    <property type="entry name" value="ClpB_D2-small"/>
    <property type="match status" value="1"/>
</dbReference>
<dbReference type="SUPFAM" id="SSF52540">
    <property type="entry name" value="P-loop containing nucleoside triphosphate hydrolases"/>
    <property type="match status" value="1"/>
</dbReference>
<name>HSLU_HELAH</name>
<gene>
    <name evidence="1" type="primary">hslU</name>
    <name type="ordered locus">Hac_0884</name>
</gene>
<proteinExistence type="inferred from homology"/>
<feature type="chain" id="PRO_1000012748" description="ATP-dependent protease ATPase subunit HslU">
    <location>
        <begin position="1"/>
        <end position="443"/>
    </location>
</feature>
<feature type="binding site" evidence="1">
    <location>
        <position position="20"/>
    </location>
    <ligand>
        <name>ATP</name>
        <dbReference type="ChEBI" id="CHEBI:30616"/>
    </ligand>
</feature>
<feature type="binding site" evidence="1">
    <location>
        <begin position="62"/>
        <end position="67"/>
    </location>
    <ligand>
        <name>ATP</name>
        <dbReference type="ChEBI" id="CHEBI:30616"/>
    </ligand>
</feature>
<feature type="binding site" evidence="1">
    <location>
        <position position="255"/>
    </location>
    <ligand>
        <name>ATP</name>
        <dbReference type="ChEBI" id="CHEBI:30616"/>
    </ligand>
</feature>
<feature type="binding site" evidence="1">
    <location>
        <position position="321"/>
    </location>
    <ligand>
        <name>ATP</name>
        <dbReference type="ChEBI" id="CHEBI:30616"/>
    </ligand>
</feature>
<feature type="binding site" evidence="1">
    <location>
        <position position="393"/>
    </location>
    <ligand>
        <name>ATP</name>
        <dbReference type="ChEBI" id="CHEBI:30616"/>
    </ligand>
</feature>
<organism>
    <name type="scientific">Helicobacter acinonychis (strain Sheeba)</name>
    <dbReference type="NCBI Taxonomy" id="382638"/>
    <lineage>
        <taxon>Bacteria</taxon>
        <taxon>Pseudomonadati</taxon>
        <taxon>Campylobacterota</taxon>
        <taxon>Epsilonproteobacteria</taxon>
        <taxon>Campylobacterales</taxon>
        <taxon>Helicobacteraceae</taxon>
        <taxon>Helicobacter</taxon>
    </lineage>
</organism>
<sequence length="443" mass="50273">MSKLNMTPREIVTYLDEYIIEQKEAKKFIAIALRNRYRRLQLEKSLQEEITPKNILMIGSTGVGKTEIARRMAKIMKLPFVKVEASKYTEVGFVGRDVESMVRDLVNNSVLLVENEHKEKLKDKIEEAVVEKIAKKLLPPLPSGVSEEKKQEYANSLLRMQQRIVQGELDSREIEIEVRKKSIEIDSNVPPEILRVQENLIKVFHKEQDKVKKTLSVKEAKEALKAEISDTLLDSEAIKMEGLKRAESSGVIFIDEIDKIAISPKEGGRQDPSKEGVQRDLLPIVEGSVVNTKYGSIKTEHILFIAAGAFHLSKPSDLIPELQGRFPLRVELENLTEEIMYMILTQTKTSIIKQYQALLKVEGVEVAFEDDAIKELAKLSYNANQKSEDIGARRLHTTIEKVLEDISFEAEDYSGQKVTITKELVQSKLGDLVADENLVKYIL</sequence>
<accession>Q17XG0</accession>
<comment type="function">
    <text evidence="1">ATPase subunit of a proteasome-like degradation complex; this subunit has chaperone activity. The binding of ATP and its subsequent hydrolysis by HslU are essential for unfolding of protein substrates subsequently hydrolyzed by HslV. HslU recognizes the N-terminal part of its protein substrates and unfolds these before they are guided to HslV for hydrolysis.</text>
</comment>
<comment type="subunit">
    <text evidence="1">A double ring-shaped homohexamer of HslV is capped on each side by a ring-shaped HslU homohexamer. The assembly of the HslU/HslV complex is dependent on binding of ATP.</text>
</comment>
<comment type="subcellular location">
    <subcellularLocation>
        <location evidence="1">Cytoplasm</location>
    </subcellularLocation>
</comment>
<comment type="similarity">
    <text evidence="1">Belongs to the ClpX chaperone family. HslU subfamily.</text>
</comment>
<keyword id="KW-0067">ATP-binding</keyword>
<keyword id="KW-0143">Chaperone</keyword>
<keyword id="KW-0963">Cytoplasm</keyword>
<keyword id="KW-0547">Nucleotide-binding</keyword>
<keyword id="KW-0346">Stress response</keyword>
<reference key="1">
    <citation type="journal article" date="2006" name="PLoS Genet.">
        <title>Who ate whom? Adaptive Helicobacter genomic changes that accompanied a host jump from early humans to large felines.</title>
        <authorList>
            <person name="Eppinger M."/>
            <person name="Baar C."/>
            <person name="Linz B."/>
            <person name="Raddatz G."/>
            <person name="Lanz C."/>
            <person name="Keller H."/>
            <person name="Morelli G."/>
            <person name="Gressmann H."/>
            <person name="Achtman M."/>
            <person name="Schuster S.C."/>
        </authorList>
    </citation>
    <scope>NUCLEOTIDE SEQUENCE [LARGE SCALE GENOMIC DNA]</scope>
    <source>
        <strain>Sheeba</strain>
    </source>
</reference>
<protein>
    <recommendedName>
        <fullName evidence="1">ATP-dependent protease ATPase subunit HslU</fullName>
    </recommendedName>
    <alternativeName>
        <fullName evidence="1">Unfoldase HslU</fullName>
    </alternativeName>
</protein>